<gene>
    <name evidence="1" type="primary">hisI</name>
    <name type="ordered locus">BSUIS_A1120</name>
</gene>
<organism>
    <name type="scientific">Brucella suis (strain ATCC 23445 / NCTC 10510)</name>
    <dbReference type="NCBI Taxonomy" id="470137"/>
    <lineage>
        <taxon>Bacteria</taxon>
        <taxon>Pseudomonadati</taxon>
        <taxon>Pseudomonadota</taxon>
        <taxon>Alphaproteobacteria</taxon>
        <taxon>Hyphomicrobiales</taxon>
        <taxon>Brucellaceae</taxon>
        <taxon>Brucella/Ochrobactrum group</taxon>
        <taxon>Brucella</taxon>
    </lineage>
</organism>
<sequence length="139" mass="15308">MSIFPAQPSDKKAVEEGAAFMPRFDASGLITAIVTDARDGELLMVAHMNEEALRLTLETGIAHYWSRSRKTLWKKGETSGNLQSVVELRTDCDQDALWLKVHVAGDGPTCHTGRRSCFYRQVVSSGGKVALTMVSDHDQ</sequence>
<protein>
    <recommendedName>
        <fullName evidence="1">Phosphoribosyl-AMP cyclohydrolase</fullName>
        <shortName evidence="1">PRA-CH</shortName>
        <ecNumber evidence="1">3.5.4.19</ecNumber>
    </recommendedName>
</protein>
<reference key="1">
    <citation type="submission" date="2007-12" db="EMBL/GenBank/DDBJ databases">
        <title>Brucella suis ATCC 23445 whole genome shotgun sequencing project.</title>
        <authorList>
            <person name="Setubal J.C."/>
            <person name="Bowns C."/>
            <person name="Boyle S."/>
            <person name="Crasta O.R."/>
            <person name="Czar M.J."/>
            <person name="Dharmanolla C."/>
            <person name="Gillespie J.J."/>
            <person name="Kenyon R.W."/>
            <person name="Lu J."/>
            <person name="Mane S."/>
            <person name="Mohapatra S."/>
            <person name="Nagrani S."/>
            <person name="Purkayastha A."/>
            <person name="Rajasimha H.K."/>
            <person name="Shallom J.M."/>
            <person name="Shallom S."/>
            <person name="Shukla M."/>
            <person name="Snyder E.E."/>
            <person name="Sobral B.W."/>
            <person name="Wattam A.R."/>
            <person name="Will R."/>
            <person name="Williams K."/>
            <person name="Yoo H."/>
            <person name="Bruce D."/>
            <person name="Detter C."/>
            <person name="Munk C."/>
            <person name="Brettin T.S."/>
        </authorList>
    </citation>
    <scope>NUCLEOTIDE SEQUENCE [LARGE SCALE GENOMIC DNA]</scope>
    <source>
        <strain>ATCC 23445 / NCTC 10510</strain>
    </source>
</reference>
<dbReference type="EC" id="3.5.4.19" evidence="1"/>
<dbReference type="EMBL" id="CP000911">
    <property type="protein sequence ID" value="ABY38176.1"/>
    <property type="molecule type" value="Genomic_DNA"/>
</dbReference>
<dbReference type="RefSeq" id="WP_004690855.1">
    <property type="nucleotide sequence ID" value="NC_010169.1"/>
</dbReference>
<dbReference type="SMR" id="B0CGM5"/>
<dbReference type="GeneID" id="55590764"/>
<dbReference type="KEGG" id="bmt:BSUIS_A1120"/>
<dbReference type="HOGENOM" id="CLU_048577_5_0_5"/>
<dbReference type="UniPathway" id="UPA00031">
    <property type="reaction ID" value="UER00008"/>
</dbReference>
<dbReference type="Proteomes" id="UP000008545">
    <property type="component" value="Chromosome I"/>
</dbReference>
<dbReference type="GO" id="GO:0005737">
    <property type="term" value="C:cytoplasm"/>
    <property type="evidence" value="ECO:0007669"/>
    <property type="project" value="UniProtKB-SubCell"/>
</dbReference>
<dbReference type="GO" id="GO:0000287">
    <property type="term" value="F:magnesium ion binding"/>
    <property type="evidence" value="ECO:0007669"/>
    <property type="project" value="UniProtKB-UniRule"/>
</dbReference>
<dbReference type="GO" id="GO:0004635">
    <property type="term" value="F:phosphoribosyl-AMP cyclohydrolase activity"/>
    <property type="evidence" value="ECO:0007669"/>
    <property type="project" value="UniProtKB-UniRule"/>
</dbReference>
<dbReference type="GO" id="GO:0008270">
    <property type="term" value="F:zinc ion binding"/>
    <property type="evidence" value="ECO:0007669"/>
    <property type="project" value="UniProtKB-UniRule"/>
</dbReference>
<dbReference type="GO" id="GO:0000105">
    <property type="term" value="P:L-histidine biosynthetic process"/>
    <property type="evidence" value="ECO:0007669"/>
    <property type="project" value="UniProtKB-UniRule"/>
</dbReference>
<dbReference type="FunFam" id="3.10.20.810:FF:000001">
    <property type="entry name" value="Histidine biosynthesis bifunctional protein HisIE"/>
    <property type="match status" value="1"/>
</dbReference>
<dbReference type="Gene3D" id="4.10.80.70">
    <property type="match status" value="1"/>
</dbReference>
<dbReference type="Gene3D" id="3.10.20.810">
    <property type="entry name" value="Phosphoribosyl-AMP cyclohydrolase"/>
    <property type="match status" value="1"/>
</dbReference>
<dbReference type="HAMAP" id="MF_01021">
    <property type="entry name" value="HisI"/>
    <property type="match status" value="1"/>
</dbReference>
<dbReference type="InterPro" id="IPR026660">
    <property type="entry name" value="PRA-CH"/>
</dbReference>
<dbReference type="InterPro" id="IPR002496">
    <property type="entry name" value="PRib_AMP_CycHydrolase_dom"/>
</dbReference>
<dbReference type="InterPro" id="IPR038019">
    <property type="entry name" value="PRib_AMP_CycHydrolase_sf"/>
</dbReference>
<dbReference type="NCBIfam" id="NF000768">
    <property type="entry name" value="PRK00051.1"/>
    <property type="match status" value="1"/>
</dbReference>
<dbReference type="PANTHER" id="PTHR42945">
    <property type="entry name" value="HISTIDINE BIOSYNTHESIS BIFUNCTIONAL PROTEIN"/>
    <property type="match status" value="1"/>
</dbReference>
<dbReference type="PANTHER" id="PTHR42945:SF1">
    <property type="entry name" value="HISTIDINE BIOSYNTHESIS BIFUNCTIONAL PROTEIN HIS7"/>
    <property type="match status" value="1"/>
</dbReference>
<dbReference type="Pfam" id="PF01502">
    <property type="entry name" value="PRA-CH"/>
    <property type="match status" value="1"/>
</dbReference>
<dbReference type="SUPFAM" id="SSF141734">
    <property type="entry name" value="HisI-like"/>
    <property type="match status" value="1"/>
</dbReference>
<feature type="chain" id="PRO_1000084175" description="Phosphoribosyl-AMP cyclohydrolase">
    <location>
        <begin position="1"/>
        <end position="139"/>
    </location>
</feature>
<feature type="binding site" evidence="1">
    <location>
        <position position="91"/>
    </location>
    <ligand>
        <name>Mg(2+)</name>
        <dbReference type="ChEBI" id="CHEBI:18420"/>
    </ligand>
</feature>
<feature type="binding site" evidence="1">
    <location>
        <position position="92"/>
    </location>
    <ligand>
        <name>Zn(2+)</name>
        <dbReference type="ChEBI" id="CHEBI:29105"/>
        <note>ligand shared between dimeric partners</note>
    </ligand>
</feature>
<feature type="binding site" evidence="1">
    <location>
        <position position="93"/>
    </location>
    <ligand>
        <name>Mg(2+)</name>
        <dbReference type="ChEBI" id="CHEBI:18420"/>
    </ligand>
</feature>
<feature type="binding site" evidence="1">
    <location>
        <position position="95"/>
    </location>
    <ligand>
        <name>Mg(2+)</name>
        <dbReference type="ChEBI" id="CHEBI:18420"/>
    </ligand>
</feature>
<feature type="binding site" evidence="1">
    <location>
        <position position="110"/>
    </location>
    <ligand>
        <name>Zn(2+)</name>
        <dbReference type="ChEBI" id="CHEBI:29105"/>
        <note>ligand shared between dimeric partners</note>
    </ligand>
</feature>
<feature type="binding site" evidence="1">
    <location>
        <position position="117"/>
    </location>
    <ligand>
        <name>Zn(2+)</name>
        <dbReference type="ChEBI" id="CHEBI:29105"/>
        <note>ligand shared between dimeric partners</note>
    </ligand>
</feature>
<accession>B0CGM5</accession>
<evidence type="ECO:0000255" key="1">
    <source>
        <dbReference type="HAMAP-Rule" id="MF_01021"/>
    </source>
</evidence>
<proteinExistence type="inferred from homology"/>
<comment type="function">
    <text evidence="1">Catalyzes the hydrolysis of the adenine ring of phosphoribosyl-AMP.</text>
</comment>
<comment type="catalytic activity">
    <reaction evidence="1">
        <text>1-(5-phospho-beta-D-ribosyl)-5'-AMP + H2O = 1-(5-phospho-beta-D-ribosyl)-5-[(5-phospho-beta-D-ribosylamino)methylideneamino]imidazole-4-carboxamide</text>
        <dbReference type="Rhea" id="RHEA:20049"/>
        <dbReference type="ChEBI" id="CHEBI:15377"/>
        <dbReference type="ChEBI" id="CHEBI:58435"/>
        <dbReference type="ChEBI" id="CHEBI:59457"/>
        <dbReference type="EC" id="3.5.4.19"/>
    </reaction>
</comment>
<comment type="cofactor">
    <cofactor evidence="1">
        <name>Mg(2+)</name>
        <dbReference type="ChEBI" id="CHEBI:18420"/>
    </cofactor>
    <text evidence="1">Binds 1 Mg(2+) ion per subunit.</text>
</comment>
<comment type="cofactor">
    <cofactor evidence="1">
        <name>Zn(2+)</name>
        <dbReference type="ChEBI" id="CHEBI:29105"/>
    </cofactor>
    <text evidence="1">Binds 1 zinc ion per subunit.</text>
</comment>
<comment type="pathway">
    <text evidence="1">Amino-acid biosynthesis; L-histidine biosynthesis; L-histidine from 5-phospho-alpha-D-ribose 1-diphosphate: step 3/9.</text>
</comment>
<comment type="subunit">
    <text evidence="1">Homodimer.</text>
</comment>
<comment type="subcellular location">
    <subcellularLocation>
        <location evidence="1">Cytoplasm</location>
    </subcellularLocation>
</comment>
<comment type="similarity">
    <text evidence="1">Belongs to the PRA-CH family.</text>
</comment>
<name>HIS3_BRUSI</name>
<keyword id="KW-0028">Amino-acid biosynthesis</keyword>
<keyword id="KW-0963">Cytoplasm</keyword>
<keyword id="KW-0368">Histidine biosynthesis</keyword>
<keyword id="KW-0378">Hydrolase</keyword>
<keyword id="KW-0460">Magnesium</keyword>
<keyword id="KW-0479">Metal-binding</keyword>
<keyword id="KW-0862">Zinc</keyword>